<keyword id="KW-0965">Cell junction</keyword>
<keyword id="KW-0963">Cytoplasm</keyword>
<keyword id="KW-0449">Lipoprotein</keyword>
<keyword id="KW-0472">Membrane</keyword>
<keyword id="KW-0519">Myristate</keyword>
<keyword id="KW-0597">Phosphoprotein</keyword>
<keyword id="KW-1185">Reference proteome</keyword>
<protein>
    <recommendedName>
        <fullName evidence="8">Protein Niban 2</fullName>
    </recommendedName>
    <alternativeName>
        <fullName>Meg-3</fullName>
    </alternativeName>
    <alternativeName>
        <fullName>Niban-like protein 1</fullName>
    </alternativeName>
    <alternativeName>
        <fullName>Protein FAM129B</fullName>
    </alternativeName>
</protein>
<evidence type="ECO:0000250" key="1"/>
<evidence type="ECO:0000250" key="2">
    <source>
        <dbReference type="UniProtKB" id="B4F7E8"/>
    </source>
</evidence>
<evidence type="ECO:0000250" key="3">
    <source>
        <dbReference type="UniProtKB" id="Q96TA1"/>
    </source>
</evidence>
<evidence type="ECO:0000255" key="4">
    <source>
        <dbReference type="PROSITE-ProRule" id="PRU00145"/>
    </source>
</evidence>
<evidence type="ECO:0000256" key="5">
    <source>
        <dbReference type="SAM" id="MobiDB-lite"/>
    </source>
</evidence>
<evidence type="ECO:0000269" key="6">
    <source>
    </source>
</evidence>
<evidence type="ECO:0000303" key="7">
    <source>
    </source>
</evidence>
<evidence type="ECO:0000305" key="8"/>
<evidence type="ECO:0000312" key="9">
    <source>
        <dbReference type="MGI" id="MGI:2442910"/>
    </source>
</evidence>
<evidence type="ECO:0007744" key="10">
    <source>
    </source>
</evidence>
<accession>Q8R1F1</accession>
<accession>Q3TCV6</accession>
<accession>Q3U8I3</accession>
<accession>Q3UC84</accession>
<accession>Q3UDW4</accession>
<accession>Q3UIE4</accession>
<accession>Q543S7</accession>
<accession>Q8BQ71</accession>
<accession>Q8CC78</accession>
<dbReference type="EMBL" id="AK033735">
    <property type="protein sequence ID" value="BAC28456.1"/>
    <property type="status" value="ALT_INIT"/>
    <property type="molecule type" value="mRNA"/>
</dbReference>
<dbReference type="EMBL" id="AK046583">
    <property type="protein sequence ID" value="BAC32795.1"/>
    <property type="molecule type" value="mRNA"/>
</dbReference>
<dbReference type="EMBL" id="AK051396">
    <property type="protein sequence ID" value="BAC34625.1"/>
    <property type="molecule type" value="mRNA"/>
</dbReference>
<dbReference type="EMBL" id="AK146953">
    <property type="protein sequence ID" value="BAE27562.1"/>
    <property type="molecule type" value="mRNA"/>
</dbReference>
<dbReference type="EMBL" id="AK149888">
    <property type="protein sequence ID" value="BAE29147.1"/>
    <property type="molecule type" value="mRNA"/>
</dbReference>
<dbReference type="EMBL" id="AK150642">
    <property type="protein sequence ID" value="BAE29730.1"/>
    <property type="molecule type" value="mRNA"/>
</dbReference>
<dbReference type="EMBL" id="AK152207">
    <property type="protein sequence ID" value="BAE31035.1"/>
    <property type="molecule type" value="mRNA"/>
</dbReference>
<dbReference type="EMBL" id="AK153489">
    <property type="protein sequence ID" value="BAE32037.1"/>
    <property type="molecule type" value="mRNA"/>
</dbReference>
<dbReference type="EMBL" id="AK170512">
    <property type="protein sequence ID" value="BAE41849.1"/>
    <property type="molecule type" value="mRNA"/>
</dbReference>
<dbReference type="EMBL" id="AL845471">
    <property type="status" value="NOT_ANNOTATED_CDS"/>
    <property type="molecule type" value="Genomic_DNA"/>
</dbReference>
<dbReference type="EMBL" id="AL929154">
    <property type="status" value="NOT_ANNOTATED_CDS"/>
    <property type="molecule type" value="Genomic_DNA"/>
</dbReference>
<dbReference type="EMBL" id="CH466542">
    <property type="protein sequence ID" value="EDL08584.1"/>
    <property type="molecule type" value="Genomic_DNA"/>
</dbReference>
<dbReference type="EMBL" id="BC024639">
    <property type="protein sequence ID" value="AAH24639.1"/>
    <property type="molecule type" value="mRNA"/>
</dbReference>
<dbReference type="EMBL" id="BC027843">
    <property type="protein sequence ID" value="AAH27843.1"/>
    <property type="molecule type" value="mRNA"/>
</dbReference>
<dbReference type="CCDS" id="CCDS15934.1"/>
<dbReference type="RefSeq" id="NP_666231.1">
    <property type="nucleotide sequence ID" value="NM_146119.2"/>
</dbReference>
<dbReference type="SMR" id="Q8R1F1"/>
<dbReference type="BioGRID" id="230679">
    <property type="interactions" value="2"/>
</dbReference>
<dbReference type="FunCoup" id="Q8R1F1">
    <property type="interactions" value="454"/>
</dbReference>
<dbReference type="IntAct" id="Q8R1F1">
    <property type="interactions" value="1"/>
</dbReference>
<dbReference type="iPTMnet" id="Q8R1F1"/>
<dbReference type="PhosphoSitePlus" id="Q8R1F1"/>
<dbReference type="SwissPalm" id="Q8R1F1"/>
<dbReference type="jPOST" id="Q8R1F1"/>
<dbReference type="PaxDb" id="10090-ENSMUSP00000028135"/>
<dbReference type="PeptideAtlas" id="Q8R1F1"/>
<dbReference type="ProteomicsDB" id="293656"/>
<dbReference type="Pumba" id="Q8R1F1"/>
<dbReference type="Antibodypedia" id="17013">
    <property type="antibodies" value="136 antibodies from 29 providers"/>
</dbReference>
<dbReference type="Ensembl" id="ENSMUST00000028135.15">
    <property type="protein sequence ID" value="ENSMUSP00000028135.9"/>
    <property type="gene ID" value="ENSMUSG00000026796.17"/>
</dbReference>
<dbReference type="GeneID" id="227737"/>
<dbReference type="KEGG" id="mmu:227737"/>
<dbReference type="UCSC" id="uc008jhc.2">
    <property type="organism name" value="mouse"/>
</dbReference>
<dbReference type="AGR" id="MGI:2442910"/>
<dbReference type="CTD" id="64855"/>
<dbReference type="MGI" id="MGI:2442910">
    <property type="gene designation" value="Niban2"/>
</dbReference>
<dbReference type="VEuPathDB" id="HostDB:ENSMUSG00000026796"/>
<dbReference type="eggNOG" id="ENOG502QV2S">
    <property type="taxonomic scope" value="Eukaryota"/>
</dbReference>
<dbReference type="GeneTree" id="ENSGT00940000154149"/>
<dbReference type="HOGENOM" id="CLU_009718_1_1_1"/>
<dbReference type="InParanoid" id="Q8R1F1"/>
<dbReference type="OMA" id="GTPIDWG"/>
<dbReference type="OrthoDB" id="9010513at2759"/>
<dbReference type="PhylomeDB" id="Q8R1F1"/>
<dbReference type="TreeFam" id="TF333351"/>
<dbReference type="BioGRID-ORCS" id="227737">
    <property type="hits" value="2 hits in 76 CRISPR screens"/>
</dbReference>
<dbReference type="ChiTaRS" id="Fam129b">
    <property type="organism name" value="mouse"/>
</dbReference>
<dbReference type="PRO" id="PR:Q8R1F1"/>
<dbReference type="Proteomes" id="UP000000589">
    <property type="component" value="Chromosome 2"/>
</dbReference>
<dbReference type="RNAct" id="Q8R1F1">
    <property type="molecule type" value="protein"/>
</dbReference>
<dbReference type="Bgee" id="ENSMUSG00000026796">
    <property type="expression patterns" value="Expressed in gastrula and 220 other cell types or tissues"/>
</dbReference>
<dbReference type="ExpressionAtlas" id="Q8R1F1">
    <property type="expression patterns" value="baseline and differential"/>
</dbReference>
<dbReference type="GO" id="GO:0005912">
    <property type="term" value="C:adherens junction"/>
    <property type="evidence" value="ECO:0007669"/>
    <property type="project" value="UniProtKB-SubCell"/>
</dbReference>
<dbReference type="GO" id="GO:0005829">
    <property type="term" value="C:cytosol"/>
    <property type="evidence" value="ECO:0000314"/>
    <property type="project" value="UniProtKB"/>
</dbReference>
<dbReference type="GO" id="GO:0005886">
    <property type="term" value="C:plasma membrane"/>
    <property type="evidence" value="ECO:0007669"/>
    <property type="project" value="Ensembl"/>
</dbReference>
<dbReference type="GO" id="GO:0003713">
    <property type="term" value="F:transcription coactivator activity"/>
    <property type="evidence" value="ECO:0007669"/>
    <property type="project" value="Ensembl"/>
</dbReference>
<dbReference type="GO" id="GO:0032274">
    <property type="term" value="P:gonadotropin secretion"/>
    <property type="evidence" value="ECO:0007669"/>
    <property type="project" value="Ensembl"/>
</dbReference>
<dbReference type="GO" id="GO:0043066">
    <property type="term" value="P:negative regulation of apoptotic process"/>
    <property type="evidence" value="ECO:0007669"/>
    <property type="project" value="Ensembl"/>
</dbReference>
<dbReference type="GO" id="GO:0008285">
    <property type="term" value="P:negative regulation of cell population proliferation"/>
    <property type="evidence" value="ECO:0007669"/>
    <property type="project" value="Ensembl"/>
</dbReference>
<dbReference type="GO" id="GO:2000279">
    <property type="term" value="P:negative regulation of DNA biosynthetic process"/>
    <property type="evidence" value="ECO:0007669"/>
    <property type="project" value="Ensembl"/>
</dbReference>
<dbReference type="GO" id="GO:0045892">
    <property type="term" value="P:negative regulation of DNA-templated transcription"/>
    <property type="evidence" value="ECO:0007669"/>
    <property type="project" value="Ensembl"/>
</dbReference>
<dbReference type="CDD" id="cd23949">
    <property type="entry name" value="Niban-like"/>
    <property type="match status" value="1"/>
</dbReference>
<dbReference type="FunFam" id="2.30.29.30:FF:000255">
    <property type="entry name" value="niban-like protein 1 isoform X1"/>
    <property type="match status" value="1"/>
</dbReference>
<dbReference type="Gene3D" id="2.30.29.30">
    <property type="entry name" value="Pleckstrin-homology domain (PH domain)/Phosphotyrosine-binding domain (PTB)"/>
    <property type="match status" value="1"/>
</dbReference>
<dbReference type="InterPro" id="IPR026088">
    <property type="entry name" value="Niban-like"/>
</dbReference>
<dbReference type="InterPro" id="IPR011993">
    <property type="entry name" value="PH-like_dom_sf"/>
</dbReference>
<dbReference type="InterPro" id="IPR001849">
    <property type="entry name" value="PH_domain"/>
</dbReference>
<dbReference type="PANTHER" id="PTHR14392">
    <property type="entry name" value="NIBAN FAMILY MEMBER"/>
    <property type="match status" value="1"/>
</dbReference>
<dbReference type="PANTHER" id="PTHR14392:SF2">
    <property type="entry name" value="PROTEIN NIBAN 2"/>
    <property type="match status" value="1"/>
</dbReference>
<dbReference type="SUPFAM" id="SSF50729">
    <property type="entry name" value="PH domain-like"/>
    <property type="match status" value="1"/>
</dbReference>
<dbReference type="PROSITE" id="PS50003">
    <property type="entry name" value="PH_DOMAIN"/>
    <property type="match status" value="1"/>
</dbReference>
<comment type="function">
    <text evidence="1">May play a role in apoptosis suppression.</text>
</comment>
<comment type="subcellular location">
    <subcellularLocation>
        <location evidence="6">Cytoplasm</location>
        <location evidence="6">Cytosol</location>
    </subcellularLocation>
    <subcellularLocation>
        <location evidence="1">Cell junction</location>
        <location evidence="1">Adherens junction</location>
    </subcellularLocation>
    <subcellularLocation>
        <location evidence="3">Membrane</location>
        <topology evidence="3">Lipid-anchor</topology>
    </subcellularLocation>
    <text evidence="1">In exponentially growing cells, exclusively cytoplasmic. Cell membrane localization is observed when cells reach confluency and during telophase (By similarity). Phosphorylation may play a role in relocalization to the membrane (By similarity).</text>
</comment>
<comment type="PTM">
    <text evidence="1">As apoptosis proceeds, degraded via an proteasome-independent pathway, probably by caspases.</text>
</comment>
<comment type="similarity">
    <text evidence="8">Belongs to the Niban family.</text>
</comment>
<comment type="sequence caution" evidence="8">
    <conflict type="erroneous initiation">
        <sequence resource="EMBL-CDS" id="BAC28456"/>
    </conflict>
    <text>Truncated N-terminus.</text>
</comment>
<organism>
    <name type="scientific">Mus musculus</name>
    <name type="common">Mouse</name>
    <dbReference type="NCBI Taxonomy" id="10090"/>
    <lineage>
        <taxon>Eukaryota</taxon>
        <taxon>Metazoa</taxon>
        <taxon>Chordata</taxon>
        <taxon>Craniata</taxon>
        <taxon>Vertebrata</taxon>
        <taxon>Euteleostomi</taxon>
        <taxon>Mammalia</taxon>
        <taxon>Eutheria</taxon>
        <taxon>Euarchontoglires</taxon>
        <taxon>Glires</taxon>
        <taxon>Rodentia</taxon>
        <taxon>Myomorpha</taxon>
        <taxon>Muroidea</taxon>
        <taxon>Muridae</taxon>
        <taxon>Murinae</taxon>
        <taxon>Mus</taxon>
        <taxon>Mus</taxon>
    </lineage>
</organism>
<feature type="initiator methionine" description="Removed" evidence="3">
    <location>
        <position position="1"/>
    </location>
</feature>
<feature type="chain" id="PRO_0000213122" description="Protein Niban 2">
    <location>
        <begin position="2"/>
        <end position="749"/>
    </location>
</feature>
<feature type="domain" description="PH" evidence="4">
    <location>
        <begin position="68"/>
        <end position="192"/>
    </location>
</feature>
<feature type="region of interest" description="Disordered" evidence="5">
    <location>
        <begin position="589"/>
        <end position="749"/>
    </location>
</feature>
<feature type="compositionally biased region" description="Basic and acidic residues" evidence="5">
    <location>
        <begin position="710"/>
        <end position="719"/>
    </location>
</feature>
<feature type="compositionally biased region" description="Polar residues" evidence="5">
    <location>
        <begin position="723"/>
        <end position="749"/>
    </location>
</feature>
<feature type="modified residue" description="Phosphoserine" evidence="3">
    <location>
        <position position="568"/>
    </location>
</feature>
<feature type="modified residue" description="Phosphoserine" evidence="3">
    <location>
        <position position="574"/>
    </location>
</feature>
<feature type="modified residue" description="Phosphoserine" evidence="3">
    <location>
        <position position="607"/>
    </location>
</feature>
<feature type="modified residue" description="Phosphoserine" evidence="3">
    <location>
        <position position="628"/>
    </location>
</feature>
<feature type="modified residue" description="Phosphoserine" evidence="10">
    <location>
        <position position="647"/>
    </location>
</feature>
<feature type="modified residue" description="Phosphoserine" evidence="10">
    <location>
        <position position="650"/>
    </location>
</feature>
<feature type="modified residue" description="Phosphoserine" evidence="3">
    <location>
        <position position="669"/>
    </location>
</feature>
<feature type="modified residue" description="Phosphoserine" evidence="2">
    <location>
        <position position="674"/>
    </location>
</feature>
<feature type="modified residue" description="Phosphoserine" evidence="3">
    <location>
        <position position="685"/>
    </location>
</feature>
<feature type="modified residue" description="Phosphoserine" evidence="10">
    <location>
        <position position="695"/>
    </location>
</feature>
<feature type="modified residue" description="Phosphoserine" evidence="10">
    <location>
        <position position="699"/>
    </location>
</feature>
<feature type="lipid moiety-binding region" description="N-myristoyl glycine" evidence="3">
    <location>
        <position position="2"/>
    </location>
</feature>
<feature type="sequence conflict" description="In Ref. 1; BAE31035." evidence="8" ref="1">
    <original>D</original>
    <variation>G</variation>
    <location>
        <position position="81"/>
    </location>
</feature>
<feature type="sequence conflict" description="In Ref. 1; BAC28456." evidence="8" ref="1">
    <original>P</original>
    <variation>A</variation>
    <location>
        <position position="140"/>
    </location>
</feature>
<feature type="sequence conflict" description="In Ref. 1; BAE29147." evidence="8" ref="1">
    <original>H</original>
    <variation>L</variation>
    <location>
        <position position="193"/>
    </location>
</feature>
<feature type="sequence conflict" description="In Ref. 1; BAC34625." evidence="8" ref="1">
    <original>V</original>
    <variation>E</variation>
    <location>
        <position position="333"/>
    </location>
</feature>
<feature type="sequence conflict" description="In Ref. 1; BAE27562." evidence="8" ref="1">
    <original>P</original>
    <variation>Q</variation>
    <location>
        <position position="344"/>
    </location>
</feature>
<feature type="sequence conflict" description="In Ref. 1; BAE41849." evidence="8" ref="1">
    <original>F</original>
    <variation>S</variation>
    <location>
        <position position="503"/>
    </location>
</feature>
<feature type="sequence conflict" description="In Ref. 1; BAE29147." evidence="8" ref="1">
    <original>T</original>
    <variation>A</variation>
    <location>
        <position position="655"/>
    </location>
</feature>
<feature type="sequence conflict" description="In Ref. 1; BAE27562." evidence="8" ref="1">
    <original>A</original>
    <variation>G</variation>
    <location>
        <position position="662"/>
    </location>
</feature>
<feature type="sequence conflict" description="In Ref. 1; BAE29730." evidence="8" ref="1">
    <original>D</original>
    <variation>V</variation>
    <location>
        <position position="711"/>
    </location>
</feature>
<feature type="sequence conflict" description="In Ref. 1; BAE41849." evidence="8" ref="1">
    <original>E</original>
    <variation>K</variation>
    <location>
        <position position="724"/>
    </location>
</feature>
<proteinExistence type="evidence at protein level"/>
<sequence>MGDVLSTHLDDARRQHIAEKTEKILTEFLRFYEDQYGVSLFNSMRHEIEGTGPPQAQLLWRKVPLDERIIFSGNLFQYQEDNKKWRNRFSLVPHNYGLVLYENKVAYERQIPPRAVINSAGYKVLTSVDQYLELVGNSLPGTTSKSGSTPILKCPTQFPLILWHPYARHYYFCMMTEAEQDKWQAVLQDCVRHCNNGIPENSKVEGPAFTDAIRMYRQSKEQYGTWEMLCGNEVQILSNLVMEELGPALKAELGPRLKGKPQERQRQWIQISDAVYRLVFEQAKVHFEDVLCKLQRARPAMEAVIRTDMDQIITSKEHLASKIRAFILPKAEVCVRNHVQPYIPSILEALMVPTSQGFTEVRDVFFKEVTDMNLNVINEGGIDKLGEYMEKLSQLAYHPLKMQSCYEKMEPLRLDGLQQRFDVSSTSVFKQRAQIHMREQMDNAVYTFETLLHQELGKGPTKEELCKSIQRILERVLKKYDYDSSSVRKRFFREALLQITIPFLLKKLAPTCKSELPRFQELIFEDFARFILVENTYEEVVLQTVMKDILQAVKEAAVQRKHNLYRDSMVLHNSDPNLHLLAEGTPIDWGEQYGDSGDSGGGDSGGSPCPSEAATLTEKRRRAKQVMSVVQDEESGLPFEAGVEPPSPASPDSVTELRGLLAQDLQAESSPPASPLLNGAPVQESSQPVAVPEASPPASPLRHLPPGKAVDLEPPKPSDQETGEQVSSPGSRPPIHTTTEDSAGVQTEF</sequence>
<gene>
    <name evidence="9" type="primary">Niban2</name>
    <name evidence="7" type="synonym">Fam129b</name>
</gene>
<name>NIBA2_MOUSE</name>
<reference key="1">
    <citation type="journal article" date="2005" name="Science">
        <title>The transcriptional landscape of the mammalian genome.</title>
        <authorList>
            <person name="Carninci P."/>
            <person name="Kasukawa T."/>
            <person name="Katayama S."/>
            <person name="Gough J."/>
            <person name="Frith M.C."/>
            <person name="Maeda N."/>
            <person name="Oyama R."/>
            <person name="Ravasi T."/>
            <person name="Lenhard B."/>
            <person name="Wells C."/>
            <person name="Kodzius R."/>
            <person name="Shimokawa K."/>
            <person name="Bajic V.B."/>
            <person name="Brenner S.E."/>
            <person name="Batalov S."/>
            <person name="Forrest A.R."/>
            <person name="Zavolan M."/>
            <person name="Davis M.J."/>
            <person name="Wilming L.G."/>
            <person name="Aidinis V."/>
            <person name="Allen J.E."/>
            <person name="Ambesi-Impiombato A."/>
            <person name="Apweiler R."/>
            <person name="Aturaliya R.N."/>
            <person name="Bailey T.L."/>
            <person name="Bansal M."/>
            <person name="Baxter L."/>
            <person name="Beisel K.W."/>
            <person name="Bersano T."/>
            <person name="Bono H."/>
            <person name="Chalk A.M."/>
            <person name="Chiu K.P."/>
            <person name="Choudhary V."/>
            <person name="Christoffels A."/>
            <person name="Clutterbuck D.R."/>
            <person name="Crowe M.L."/>
            <person name="Dalla E."/>
            <person name="Dalrymple B.P."/>
            <person name="de Bono B."/>
            <person name="Della Gatta G."/>
            <person name="di Bernardo D."/>
            <person name="Down T."/>
            <person name="Engstrom P."/>
            <person name="Fagiolini M."/>
            <person name="Faulkner G."/>
            <person name="Fletcher C.F."/>
            <person name="Fukushima T."/>
            <person name="Furuno M."/>
            <person name="Futaki S."/>
            <person name="Gariboldi M."/>
            <person name="Georgii-Hemming P."/>
            <person name="Gingeras T.R."/>
            <person name="Gojobori T."/>
            <person name="Green R.E."/>
            <person name="Gustincich S."/>
            <person name="Harbers M."/>
            <person name="Hayashi Y."/>
            <person name="Hensch T.K."/>
            <person name="Hirokawa N."/>
            <person name="Hill D."/>
            <person name="Huminiecki L."/>
            <person name="Iacono M."/>
            <person name="Ikeo K."/>
            <person name="Iwama A."/>
            <person name="Ishikawa T."/>
            <person name="Jakt M."/>
            <person name="Kanapin A."/>
            <person name="Katoh M."/>
            <person name="Kawasawa Y."/>
            <person name="Kelso J."/>
            <person name="Kitamura H."/>
            <person name="Kitano H."/>
            <person name="Kollias G."/>
            <person name="Krishnan S.P."/>
            <person name="Kruger A."/>
            <person name="Kummerfeld S.K."/>
            <person name="Kurochkin I.V."/>
            <person name="Lareau L.F."/>
            <person name="Lazarevic D."/>
            <person name="Lipovich L."/>
            <person name="Liu J."/>
            <person name="Liuni S."/>
            <person name="McWilliam S."/>
            <person name="Madan Babu M."/>
            <person name="Madera M."/>
            <person name="Marchionni L."/>
            <person name="Matsuda H."/>
            <person name="Matsuzawa S."/>
            <person name="Miki H."/>
            <person name="Mignone F."/>
            <person name="Miyake S."/>
            <person name="Morris K."/>
            <person name="Mottagui-Tabar S."/>
            <person name="Mulder N."/>
            <person name="Nakano N."/>
            <person name="Nakauchi H."/>
            <person name="Ng P."/>
            <person name="Nilsson R."/>
            <person name="Nishiguchi S."/>
            <person name="Nishikawa S."/>
            <person name="Nori F."/>
            <person name="Ohara O."/>
            <person name="Okazaki Y."/>
            <person name="Orlando V."/>
            <person name="Pang K.C."/>
            <person name="Pavan W.J."/>
            <person name="Pavesi G."/>
            <person name="Pesole G."/>
            <person name="Petrovsky N."/>
            <person name="Piazza S."/>
            <person name="Reed J."/>
            <person name="Reid J.F."/>
            <person name="Ring B.Z."/>
            <person name="Ringwald M."/>
            <person name="Rost B."/>
            <person name="Ruan Y."/>
            <person name="Salzberg S.L."/>
            <person name="Sandelin A."/>
            <person name="Schneider C."/>
            <person name="Schoenbach C."/>
            <person name="Sekiguchi K."/>
            <person name="Semple C.A."/>
            <person name="Seno S."/>
            <person name="Sessa L."/>
            <person name="Sheng Y."/>
            <person name="Shibata Y."/>
            <person name="Shimada H."/>
            <person name="Shimada K."/>
            <person name="Silva D."/>
            <person name="Sinclair B."/>
            <person name="Sperling S."/>
            <person name="Stupka E."/>
            <person name="Sugiura K."/>
            <person name="Sultana R."/>
            <person name="Takenaka Y."/>
            <person name="Taki K."/>
            <person name="Tammoja K."/>
            <person name="Tan S.L."/>
            <person name="Tang S."/>
            <person name="Taylor M.S."/>
            <person name="Tegner J."/>
            <person name="Teichmann S.A."/>
            <person name="Ueda H.R."/>
            <person name="van Nimwegen E."/>
            <person name="Verardo R."/>
            <person name="Wei C.L."/>
            <person name="Yagi K."/>
            <person name="Yamanishi H."/>
            <person name="Zabarovsky E."/>
            <person name="Zhu S."/>
            <person name="Zimmer A."/>
            <person name="Hide W."/>
            <person name="Bult C."/>
            <person name="Grimmond S.M."/>
            <person name="Teasdale R.D."/>
            <person name="Liu E.T."/>
            <person name="Brusic V."/>
            <person name="Quackenbush J."/>
            <person name="Wahlestedt C."/>
            <person name="Mattick J.S."/>
            <person name="Hume D.A."/>
            <person name="Kai C."/>
            <person name="Sasaki D."/>
            <person name="Tomaru Y."/>
            <person name="Fukuda S."/>
            <person name="Kanamori-Katayama M."/>
            <person name="Suzuki M."/>
            <person name="Aoki J."/>
            <person name="Arakawa T."/>
            <person name="Iida J."/>
            <person name="Imamura K."/>
            <person name="Itoh M."/>
            <person name="Kato T."/>
            <person name="Kawaji H."/>
            <person name="Kawagashira N."/>
            <person name="Kawashima T."/>
            <person name="Kojima M."/>
            <person name="Kondo S."/>
            <person name="Konno H."/>
            <person name="Nakano K."/>
            <person name="Ninomiya N."/>
            <person name="Nishio T."/>
            <person name="Okada M."/>
            <person name="Plessy C."/>
            <person name="Shibata K."/>
            <person name="Shiraki T."/>
            <person name="Suzuki S."/>
            <person name="Tagami M."/>
            <person name="Waki K."/>
            <person name="Watahiki A."/>
            <person name="Okamura-Oho Y."/>
            <person name="Suzuki H."/>
            <person name="Kawai J."/>
            <person name="Hayashizaki Y."/>
        </authorList>
    </citation>
    <scope>NUCLEOTIDE SEQUENCE [LARGE SCALE MRNA]</scope>
    <source>
        <strain>C57BL/6J</strain>
        <strain>NOD</strain>
        <tissue>Adipose tissue</tissue>
        <tissue>Cecum</tissue>
        <tissue>Dendritic cell</tissue>
        <tissue>Embryonic heart</tissue>
        <tissue>Embryonic spinal ganglion</tissue>
        <tissue>Macrophage</tissue>
    </source>
</reference>
<reference key="2">
    <citation type="journal article" date="2009" name="PLoS Biol.">
        <title>Lineage-specific biology revealed by a finished genome assembly of the mouse.</title>
        <authorList>
            <person name="Church D.M."/>
            <person name="Goodstadt L."/>
            <person name="Hillier L.W."/>
            <person name="Zody M.C."/>
            <person name="Goldstein S."/>
            <person name="She X."/>
            <person name="Bult C.J."/>
            <person name="Agarwala R."/>
            <person name="Cherry J.L."/>
            <person name="DiCuccio M."/>
            <person name="Hlavina W."/>
            <person name="Kapustin Y."/>
            <person name="Meric P."/>
            <person name="Maglott D."/>
            <person name="Birtle Z."/>
            <person name="Marques A.C."/>
            <person name="Graves T."/>
            <person name="Zhou S."/>
            <person name="Teague B."/>
            <person name="Potamousis K."/>
            <person name="Churas C."/>
            <person name="Place M."/>
            <person name="Herschleb J."/>
            <person name="Runnheim R."/>
            <person name="Forrest D."/>
            <person name="Amos-Landgraf J."/>
            <person name="Schwartz D.C."/>
            <person name="Cheng Z."/>
            <person name="Lindblad-Toh K."/>
            <person name="Eichler E.E."/>
            <person name="Ponting C.P."/>
        </authorList>
    </citation>
    <scope>NUCLEOTIDE SEQUENCE [LARGE SCALE GENOMIC DNA]</scope>
    <source>
        <strain>C57BL/6J</strain>
    </source>
</reference>
<reference key="3">
    <citation type="submission" date="2005-07" db="EMBL/GenBank/DDBJ databases">
        <authorList>
            <person name="Mural R.J."/>
            <person name="Adams M.D."/>
            <person name="Myers E.W."/>
            <person name="Smith H.O."/>
            <person name="Venter J.C."/>
        </authorList>
    </citation>
    <scope>NUCLEOTIDE SEQUENCE [LARGE SCALE GENOMIC DNA]</scope>
</reference>
<reference key="4">
    <citation type="journal article" date="2004" name="Genome Res.">
        <title>The status, quality, and expansion of the NIH full-length cDNA project: the Mammalian Gene Collection (MGC).</title>
        <authorList>
            <consortium name="The MGC Project Team"/>
        </authorList>
    </citation>
    <scope>NUCLEOTIDE SEQUENCE [LARGE SCALE MRNA]</scope>
</reference>
<reference key="5">
    <citation type="journal article" date="2010" name="Cell">
        <title>A tissue-specific atlas of mouse protein phosphorylation and expression.</title>
        <authorList>
            <person name="Huttlin E.L."/>
            <person name="Jedrychowski M.P."/>
            <person name="Elias J.E."/>
            <person name="Goswami T."/>
            <person name="Rad R."/>
            <person name="Beausoleil S.A."/>
            <person name="Villen J."/>
            <person name="Haas W."/>
            <person name="Sowa M.E."/>
            <person name="Gygi S.P."/>
        </authorList>
    </citation>
    <scope>PHOSPHORYLATION [LARGE SCALE ANALYSIS] AT SER-647; SER-650; SER-695 AND SER-699</scope>
    <scope>IDENTIFICATION BY MASS SPECTROMETRY [LARGE SCALE ANALYSIS]</scope>
    <source>
        <tissue>Brain</tissue>
        <tissue>Brown adipose tissue</tissue>
        <tissue>Heart</tissue>
        <tissue>Kidney</tissue>
        <tissue>Liver</tissue>
        <tissue>Lung</tissue>
        <tissue>Pancreas</tissue>
        <tissue>Spleen</tissue>
        <tissue>Testis</tissue>
    </source>
</reference>
<reference key="6">
    <citation type="journal article" date="2011" name="J. Biol. Chem.">
        <title>FAM129B/MINERVA, a novel adherens junction-associated protein, suppresses apoptosis in HeLa cells.</title>
        <authorList>
            <person name="Chen S."/>
            <person name="Evans H.G."/>
            <person name="Evans D.R."/>
        </authorList>
    </citation>
    <scope>SUBCELLULAR LOCATION</scope>
</reference>